<dbReference type="EMBL" id="BC079277">
    <property type="protein sequence ID" value="AAH79277.1"/>
    <property type="molecule type" value="mRNA"/>
</dbReference>
<dbReference type="RefSeq" id="NP_001012036.1">
    <property type="nucleotide sequence ID" value="NM_001012036.1"/>
</dbReference>
<dbReference type="FunCoup" id="Q6AXX4">
    <property type="interactions" value="3122"/>
</dbReference>
<dbReference type="STRING" id="10116.ENSRNOP00000004787"/>
<dbReference type="iPTMnet" id="Q6AXX4"/>
<dbReference type="PhosphoSitePlus" id="Q6AXX4"/>
<dbReference type="jPOST" id="Q6AXX4"/>
<dbReference type="PaxDb" id="10116-ENSRNOP00000004787"/>
<dbReference type="Ensembl" id="ENSRNOT00000004787.4">
    <property type="protein sequence ID" value="ENSRNOP00000004787.1"/>
    <property type="gene ID" value="ENSRNOG00000003599.4"/>
</dbReference>
<dbReference type="GeneID" id="305258"/>
<dbReference type="KEGG" id="rno:305258"/>
<dbReference type="UCSC" id="RGD:1308540">
    <property type="organism name" value="rat"/>
</dbReference>
<dbReference type="AGR" id="RGD:1308540"/>
<dbReference type="CTD" id="57050"/>
<dbReference type="RGD" id="1308540">
    <property type="gene designation" value="Utp3"/>
</dbReference>
<dbReference type="eggNOG" id="KOG3118">
    <property type="taxonomic scope" value="Eukaryota"/>
</dbReference>
<dbReference type="GeneTree" id="ENSGT00500000044947"/>
<dbReference type="HOGENOM" id="CLU_025161_1_0_1"/>
<dbReference type="InParanoid" id="Q6AXX4"/>
<dbReference type="OMA" id="EEYIRPQ"/>
<dbReference type="OrthoDB" id="1924577at2759"/>
<dbReference type="PhylomeDB" id="Q6AXX4"/>
<dbReference type="TreeFam" id="TF315177"/>
<dbReference type="Reactome" id="R-RNO-6791226">
    <property type="pathway name" value="Major pathway of rRNA processing in the nucleolus and cytosol"/>
</dbReference>
<dbReference type="PRO" id="PR:Q6AXX4"/>
<dbReference type="Proteomes" id="UP000002494">
    <property type="component" value="Chromosome 14"/>
</dbReference>
<dbReference type="Bgee" id="ENSRNOG00000003599">
    <property type="expression patterns" value="Expressed in thymus and 20 other cell types or tissues"/>
</dbReference>
<dbReference type="GO" id="GO:0005730">
    <property type="term" value="C:nucleolus"/>
    <property type="evidence" value="ECO:0000318"/>
    <property type="project" value="GO_Central"/>
</dbReference>
<dbReference type="GO" id="GO:0005634">
    <property type="term" value="C:nucleus"/>
    <property type="evidence" value="ECO:0000250"/>
    <property type="project" value="UniProtKB"/>
</dbReference>
<dbReference type="GO" id="GO:0032040">
    <property type="term" value="C:small-subunit processome"/>
    <property type="evidence" value="ECO:0000250"/>
    <property type="project" value="UniProtKB"/>
</dbReference>
<dbReference type="GO" id="GO:0007420">
    <property type="term" value="P:brain development"/>
    <property type="evidence" value="ECO:0000250"/>
    <property type="project" value="UniProtKB"/>
</dbReference>
<dbReference type="GO" id="GO:0006325">
    <property type="term" value="P:chromatin organization"/>
    <property type="evidence" value="ECO:0007669"/>
    <property type="project" value="UniProtKB-KW"/>
</dbReference>
<dbReference type="GO" id="GO:0000462">
    <property type="term" value="P:maturation of SSU-rRNA from tricistronic rRNA transcript (SSU-rRNA, 5.8S rRNA, LSU-rRNA)"/>
    <property type="evidence" value="ECO:0000318"/>
    <property type="project" value="GO_Central"/>
</dbReference>
<dbReference type="GO" id="GO:0042274">
    <property type="term" value="P:ribosomal small subunit biogenesis"/>
    <property type="evidence" value="ECO:0000250"/>
    <property type="project" value="UniProtKB"/>
</dbReference>
<dbReference type="InterPro" id="IPR007146">
    <property type="entry name" value="Sas10/Utp3/C1D"/>
</dbReference>
<dbReference type="InterPro" id="IPR018972">
    <property type="entry name" value="Sas10_C_dom"/>
</dbReference>
<dbReference type="PANTHER" id="PTHR13237:SF8">
    <property type="entry name" value="SOMETHING ABOUT SILENCING PROTEIN 10"/>
    <property type="match status" value="1"/>
</dbReference>
<dbReference type="PANTHER" id="PTHR13237">
    <property type="entry name" value="SOMETHING ABOUT SILENCING PROTEIN 10-RELATED"/>
    <property type="match status" value="1"/>
</dbReference>
<dbReference type="Pfam" id="PF09368">
    <property type="entry name" value="Sas10"/>
    <property type="match status" value="1"/>
</dbReference>
<dbReference type="Pfam" id="PF04000">
    <property type="entry name" value="Sas10_Utp3"/>
    <property type="match status" value="1"/>
</dbReference>
<organism>
    <name type="scientific">Rattus norvegicus</name>
    <name type="common">Rat</name>
    <dbReference type="NCBI Taxonomy" id="10116"/>
    <lineage>
        <taxon>Eukaryota</taxon>
        <taxon>Metazoa</taxon>
        <taxon>Chordata</taxon>
        <taxon>Craniata</taxon>
        <taxon>Vertebrata</taxon>
        <taxon>Euteleostomi</taxon>
        <taxon>Mammalia</taxon>
        <taxon>Eutheria</taxon>
        <taxon>Euarchontoglires</taxon>
        <taxon>Glires</taxon>
        <taxon>Rodentia</taxon>
        <taxon>Myomorpha</taxon>
        <taxon>Muroidea</taxon>
        <taxon>Muridae</taxon>
        <taxon>Murinae</taxon>
        <taxon>Rattus</taxon>
    </lineage>
</organism>
<reference key="1">
    <citation type="journal article" date="2004" name="Genome Res.">
        <title>The status, quality, and expansion of the NIH full-length cDNA project: the Mammalian Gene Collection (MGC).</title>
        <authorList>
            <consortium name="The MGC Project Team"/>
        </authorList>
    </citation>
    <scope>NUCLEOTIDE SEQUENCE [LARGE SCALE MRNA]</scope>
    <source>
        <strain>Brown Norway</strain>
        <tissue>Testis</tissue>
    </source>
</reference>
<reference key="2">
    <citation type="journal article" date="2012" name="Nat. Commun.">
        <title>Quantitative maps of protein phosphorylation sites across 14 different rat organs and tissues.</title>
        <authorList>
            <person name="Lundby A."/>
            <person name="Secher A."/>
            <person name="Lage K."/>
            <person name="Nordsborg N.B."/>
            <person name="Dmytriyev A."/>
            <person name="Lundby C."/>
            <person name="Olsen J.V."/>
        </authorList>
    </citation>
    <scope>PHOSPHORYLATION [LARGE SCALE ANALYSIS] AT SER-37</scope>
    <scope>IDENTIFICATION BY MASS SPECTROMETRY [LARGE SCALE ANALYSIS]</scope>
</reference>
<feature type="chain" id="PRO_0000114328" description="Something about silencing protein 10">
    <location>
        <begin position="1"/>
        <end position="470"/>
    </location>
</feature>
<feature type="region of interest" description="Disordered" evidence="5">
    <location>
        <begin position="1"/>
        <end position="47"/>
    </location>
</feature>
<feature type="region of interest" description="Disordered" evidence="5">
    <location>
        <begin position="62"/>
        <end position="162"/>
    </location>
</feature>
<feature type="region of interest" description="Disordered" evidence="5">
    <location>
        <begin position="329"/>
        <end position="357"/>
    </location>
</feature>
<feature type="region of interest" description="Disordered" evidence="5">
    <location>
        <begin position="375"/>
        <end position="457"/>
    </location>
</feature>
<feature type="compositionally biased region" description="Acidic residues" evidence="5">
    <location>
        <begin position="68"/>
        <end position="107"/>
    </location>
</feature>
<feature type="compositionally biased region" description="Acidic residues" evidence="5">
    <location>
        <begin position="149"/>
        <end position="161"/>
    </location>
</feature>
<feature type="compositionally biased region" description="Basic and acidic residues" evidence="5">
    <location>
        <begin position="375"/>
        <end position="386"/>
    </location>
</feature>
<feature type="compositionally biased region" description="Basic residues" evidence="5">
    <location>
        <begin position="413"/>
        <end position="440"/>
    </location>
</feature>
<feature type="compositionally biased region" description="Basic and acidic residues" evidence="5">
    <location>
        <begin position="441"/>
        <end position="452"/>
    </location>
</feature>
<feature type="modified residue" description="Omega-N-methylarginine" evidence="3">
    <location>
        <position position="8"/>
    </location>
</feature>
<feature type="modified residue" description="Phosphoserine" evidence="7">
    <location>
        <position position="37"/>
    </location>
</feature>
<feature type="modified residue" description="N6-acetyllysine; alternate" evidence="3">
    <location>
        <position position="140"/>
    </location>
</feature>
<feature type="modified residue" description="Phosphoserine" evidence="4">
    <location>
        <position position="146"/>
    </location>
</feature>
<feature type="modified residue" description="Citrulline" evidence="1">
    <location>
        <position position="376"/>
    </location>
</feature>
<feature type="cross-link" description="Glycyl lysine isopeptide (Lys-Gly) (interchain with G-Cter in SUMO2); alternate" evidence="4">
    <location>
        <position position="140"/>
    </location>
</feature>
<evidence type="ECO:0000250" key="1"/>
<evidence type="ECO:0000250" key="2">
    <source>
        <dbReference type="UniProtKB" id="Q12136"/>
    </source>
</evidence>
<evidence type="ECO:0000250" key="3">
    <source>
        <dbReference type="UniProtKB" id="Q9JI13"/>
    </source>
</evidence>
<evidence type="ECO:0000250" key="4">
    <source>
        <dbReference type="UniProtKB" id="Q9NQZ2"/>
    </source>
</evidence>
<evidence type="ECO:0000256" key="5">
    <source>
        <dbReference type="SAM" id="MobiDB-lite"/>
    </source>
</evidence>
<evidence type="ECO:0000305" key="6"/>
<evidence type="ECO:0007744" key="7">
    <source>
    </source>
</evidence>
<gene>
    <name type="primary">Utp3</name>
    <name type="synonym">Crlz1</name>
    <name evidence="3" type="synonym">Sas10</name>
</gene>
<name>SAS10_RAT</name>
<proteinExistence type="evidence at protein level"/>
<protein>
    <recommendedName>
        <fullName>Something about silencing protein 10</fullName>
    </recommendedName>
    <alternativeName>
        <fullName>Charged amino acid-rich leucine zipper 1</fullName>
    </alternativeName>
    <alternativeName>
        <fullName>Disrupter of silencing SAS10</fullName>
    </alternativeName>
    <alternativeName>
        <fullName>UTP3 homolog</fullName>
    </alternativeName>
</protein>
<accession>Q6AXX4</accession>
<keyword id="KW-0007">Acetylation</keyword>
<keyword id="KW-0156">Chromatin regulator</keyword>
<keyword id="KW-0164">Citrullination</keyword>
<keyword id="KW-0217">Developmental protein</keyword>
<keyword id="KW-1017">Isopeptide bond</keyword>
<keyword id="KW-0488">Methylation</keyword>
<keyword id="KW-0539">Nucleus</keyword>
<keyword id="KW-0597">Phosphoprotein</keyword>
<keyword id="KW-1185">Reference proteome</keyword>
<keyword id="KW-0832">Ubl conjugation</keyword>
<sequence>MVKRSRRRGAAQWATVRAKAGRTATDENEDDLGSPPSPGDSSYYQDQVDEFHEARSRAVLAKGWNEVESGEEDDDEEEEVLPLNIDDENDEDGESSEEEEDGEDDDGGSSVQSEAEASVDPSLSWGQRKRLYYDTDYGSKSRGRQSQQEVEEEEREEEEEAQVIQRRLTQALQEDDFGVAWVEAFAKPVPQVDEAETRVVKDLAKVSVKEKLKMLRKESPELLELIEDLKVKLTEVKDELEPLIQLVEKGVIPPGKGSQYLKTKYNLYLNYCANISFYLILKARRVPAHGHPVIERLVTYRNLINKLSVVDQKLSSEIRHLLTAKEGAGKKDLNPKAKLTKTKPKSAKQTDVNADLTEEPEFDEAALEFYKEMEDRPELKRKKEENSAEEQALEEQNAKRAITYQIAKNRGLTPRRKKIDRNPRVKHREKFRRAKIRRRGQVREVRREEQRYSGELSGIRAGVKKSIKLK</sequence>
<comment type="function">
    <text evidence="2 3 4">Essential for gene silencing: has a role in the structure of silenced chromatin. Plays a role in the developing brain (By similarity). Part of the small subunit (SSU) processome, first precursor of the small eukaryotic ribosomal subunit. During the assembly of the SSU processome in the nucleolus, many ribosome biogenesis factors, an RNA chaperone and ribosomal proteins associate with the nascent pre-rRNA and work in concert to generate RNA folding, modifications, rearrangements and cleavage as well as targeted degradation of pre-ribosomal RNA by the RNA exosome (By similarity).</text>
</comment>
<comment type="subunit">
    <text evidence="4">Part of the small subunit (SSU) processome, composed of more than 70 proteins and the RNA chaperone small nucleolar RNA (snoRNA) U3.</text>
</comment>
<comment type="subcellular location">
    <subcellularLocation>
        <location evidence="4">Nucleus</location>
        <location evidence="4">Nucleolus</location>
    </subcellularLocation>
</comment>
<comment type="PTM">
    <text evidence="1">Citrullinated by PADI4.</text>
</comment>
<comment type="similarity">
    <text evidence="6">Belongs to the SAS10 family.</text>
</comment>